<protein>
    <recommendedName>
        <fullName evidence="1">UPF0303 protein Bcen_1078</fullName>
    </recommendedName>
</protein>
<accession>Q1BWM0</accession>
<proteinExistence type="inferred from homology"/>
<sequence length="165" mass="17522">MDIAHDLQSIGAQEQALVFPHFDPARAWALGNRMHALATSRGHAIAIDIVTFGQPLFYAALAGATPDNADWVRRKRNVVAHFRRSSYAIGLRMQQAGATLADKHGLPVAEYASHGGSFPLTVAGAGVIGSITASGLPQRADHEFVVEALCAELGHDYAVLALARS</sequence>
<reference key="1">
    <citation type="submission" date="2006-05" db="EMBL/GenBank/DDBJ databases">
        <title>Complete sequence of chromosome 1 of Burkholderia cenocepacia AU 1054.</title>
        <authorList>
            <consortium name="US DOE Joint Genome Institute"/>
            <person name="Copeland A."/>
            <person name="Lucas S."/>
            <person name="Lapidus A."/>
            <person name="Barry K."/>
            <person name="Detter J.C."/>
            <person name="Glavina del Rio T."/>
            <person name="Hammon N."/>
            <person name="Israni S."/>
            <person name="Dalin E."/>
            <person name="Tice H."/>
            <person name="Pitluck S."/>
            <person name="Chain P."/>
            <person name="Malfatti S."/>
            <person name="Shin M."/>
            <person name="Vergez L."/>
            <person name="Schmutz J."/>
            <person name="Larimer F."/>
            <person name="Land M."/>
            <person name="Hauser L."/>
            <person name="Kyrpides N."/>
            <person name="Lykidis A."/>
            <person name="LiPuma J.J."/>
            <person name="Konstantinidis K."/>
            <person name="Tiedje J.M."/>
            <person name="Richardson P."/>
        </authorList>
    </citation>
    <scope>NUCLEOTIDE SEQUENCE [LARGE SCALE GENOMIC DNA]</scope>
    <source>
        <strain>AU 1054</strain>
    </source>
</reference>
<comment type="similarity">
    <text evidence="1">Belongs to the UPF0303 family.</text>
</comment>
<gene>
    <name type="ordered locus">Bcen_1078</name>
</gene>
<feature type="chain" id="PRO_1000046737" description="UPF0303 protein Bcen_1078">
    <location>
        <begin position="1"/>
        <end position="165"/>
    </location>
</feature>
<organism>
    <name type="scientific">Burkholderia orbicola (strain AU 1054)</name>
    <dbReference type="NCBI Taxonomy" id="331271"/>
    <lineage>
        <taxon>Bacteria</taxon>
        <taxon>Pseudomonadati</taxon>
        <taxon>Pseudomonadota</taxon>
        <taxon>Betaproteobacteria</taxon>
        <taxon>Burkholderiales</taxon>
        <taxon>Burkholderiaceae</taxon>
        <taxon>Burkholderia</taxon>
        <taxon>Burkholderia cepacia complex</taxon>
        <taxon>Burkholderia orbicola</taxon>
    </lineage>
</organism>
<name>Y1078_BURO1</name>
<evidence type="ECO:0000255" key="1">
    <source>
        <dbReference type="HAMAP-Rule" id="MF_00761"/>
    </source>
</evidence>
<dbReference type="EMBL" id="CP000378">
    <property type="protein sequence ID" value="ABF75985.1"/>
    <property type="molecule type" value="Genomic_DNA"/>
</dbReference>
<dbReference type="SMR" id="Q1BWM0"/>
<dbReference type="HOGENOM" id="CLU_101036_2_2_4"/>
<dbReference type="Gene3D" id="3.30.450.150">
    <property type="entry name" value="Haem-degrading domain"/>
    <property type="match status" value="1"/>
</dbReference>
<dbReference type="HAMAP" id="MF_00761">
    <property type="entry name" value="UPF0303"/>
    <property type="match status" value="1"/>
</dbReference>
<dbReference type="InterPro" id="IPR005624">
    <property type="entry name" value="PduO/GlcC-like"/>
</dbReference>
<dbReference type="InterPro" id="IPR038084">
    <property type="entry name" value="PduO/GlcC-like_sf"/>
</dbReference>
<dbReference type="InterPro" id="IPR010371">
    <property type="entry name" value="YBR137W-like"/>
</dbReference>
<dbReference type="NCBIfam" id="NF002695">
    <property type="entry name" value="PRK02487.1-4"/>
    <property type="match status" value="1"/>
</dbReference>
<dbReference type="NCBIfam" id="NF002696">
    <property type="entry name" value="PRK02487.1-5"/>
    <property type="match status" value="1"/>
</dbReference>
<dbReference type="PANTHER" id="PTHR28255">
    <property type="match status" value="1"/>
</dbReference>
<dbReference type="PANTHER" id="PTHR28255:SF1">
    <property type="entry name" value="UPF0303 PROTEIN YBR137W"/>
    <property type="match status" value="1"/>
</dbReference>
<dbReference type="Pfam" id="PF03928">
    <property type="entry name" value="HbpS-like"/>
    <property type="match status" value="1"/>
</dbReference>
<dbReference type="PIRSF" id="PIRSF008757">
    <property type="entry name" value="UCP008757"/>
    <property type="match status" value="1"/>
</dbReference>
<dbReference type="SUPFAM" id="SSF143744">
    <property type="entry name" value="GlcG-like"/>
    <property type="match status" value="1"/>
</dbReference>